<organism>
    <name type="scientific">Photobacterium profundum (strain SS9)</name>
    <dbReference type="NCBI Taxonomy" id="298386"/>
    <lineage>
        <taxon>Bacteria</taxon>
        <taxon>Pseudomonadati</taxon>
        <taxon>Pseudomonadota</taxon>
        <taxon>Gammaproteobacteria</taxon>
        <taxon>Vibrionales</taxon>
        <taxon>Vibrionaceae</taxon>
        <taxon>Photobacterium</taxon>
    </lineage>
</organism>
<gene>
    <name type="ordered locus">PBPRA2420</name>
</gene>
<keyword id="KW-1003">Cell membrane</keyword>
<keyword id="KW-0472">Membrane</keyword>
<keyword id="KW-1185">Reference proteome</keyword>
<keyword id="KW-0677">Repeat</keyword>
<keyword id="KW-0812">Transmembrane</keyword>
<keyword id="KW-1133">Transmembrane helix</keyword>
<keyword id="KW-0813">Transport</keyword>
<feature type="chain" id="PRO_0000208786" description="Putative transport protein PBPRA2420">
    <location>
        <begin position="1"/>
        <end position="560"/>
    </location>
</feature>
<feature type="transmembrane region" description="Helical" evidence="1">
    <location>
        <begin position="5"/>
        <end position="25"/>
    </location>
</feature>
<feature type="transmembrane region" description="Helical" evidence="1">
    <location>
        <begin position="37"/>
        <end position="57"/>
    </location>
</feature>
<feature type="transmembrane region" description="Helical" evidence="1">
    <location>
        <begin position="66"/>
        <end position="86"/>
    </location>
</feature>
<feature type="transmembrane region" description="Helical" evidence="1">
    <location>
        <begin position="91"/>
        <end position="111"/>
    </location>
</feature>
<feature type="transmembrane region" description="Helical" evidence="1">
    <location>
        <begin position="161"/>
        <end position="181"/>
    </location>
</feature>
<feature type="transmembrane region" description="Helical" evidence="1">
    <location>
        <begin position="386"/>
        <end position="406"/>
    </location>
</feature>
<feature type="transmembrane region" description="Helical" evidence="1">
    <location>
        <begin position="409"/>
        <end position="429"/>
    </location>
</feature>
<feature type="transmembrane region" description="Helical" evidence="1">
    <location>
        <begin position="452"/>
        <end position="472"/>
    </location>
</feature>
<feature type="transmembrane region" description="Helical" evidence="1">
    <location>
        <begin position="477"/>
        <end position="497"/>
    </location>
</feature>
<feature type="transmembrane region" description="Helical" evidence="1">
    <location>
        <begin position="506"/>
        <end position="526"/>
    </location>
</feature>
<feature type="transmembrane region" description="Helical" evidence="1">
    <location>
        <begin position="539"/>
        <end position="559"/>
    </location>
</feature>
<feature type="domain" description="RCK C-terminal 1" evidence="1">
    <location>
        <begin position="203"/>
        <end position="292"/>
    </location>
</feature>
<feature type="domain" description="RCK C-terminal 2" evidence="1">
    <location>
        <begin position="293"/>
        <end position="377"/>
    </location>
</feature>
<proteinExistence type="inferred from homology"/>
<protein>
    <recommendedName>
        <fullName evidence="1">Putative transport protein PBPRA2420</fullName>
    </recommendedName>
</protein>
<reference key="1">
    <citation type="journal article" date="2005" name="Science">
        <title>Life at depth: Photobacterium profundum genome sequence and expression analysis.</title>
        <authorList>
            <person name="Vezzi A."/>
            <person name="Campanaro S."/>
            <person name="D'Angelo M."/>
            <person name="Simonato F."/>
            <person name="Vitulo N."/>
            <person name="Lauro F.M."/>
            <person name="Cestaro A."/>
            <person name="Malacrida G."/>
            <person name="Simionati B."/>
            <person name="Cannata N."/>
            <person name="Romualdi C."/>
            <person name="Bartlett D.H."/>
            <person name="Valle G."/>
        </authorList>
    </citation>
    <scope>NUCLEOTIDE SEQUENCE [LARGE SCALE GENOMIC DNA]</scope>
    <source>
        <strain>ATCC BAA-1253 / SS9</strain>
    </source>
</reference>
<name>Y2420_PHOPR</name>
<accession>Q6LPH2</accession>
<dbReference type="EMBL" id="CR378671">
    <property type="protein sequence ID" value="CAG20804.1"/>
    <property type="status" value="ALT_INIT"/>
    <property type="molecule type" value="Genomic_DNA"/>
</dbReference>
<dbReference type="RefSeq" id="WP_041394402.1">
    <property type="nucleotide sequence ID" value="NC_006370.1"/>
</dbReference>
<dbReference type="SMR" id="Q6LPH2"/>
<dbReference type="STRING" id="298386.PBPRA2420"/>
<dbReference type="KEGG" id="ppr:PBPRA2420"/>
<dbReference type="eggNOG" id="COG0569">
    <property type="taxonomic scope" value="Bacteria"/>
</dbReference>
<dbReference type="eggNOG" id="COG2985">
    <property type="taxonomic scope" value="Bacteria"/>
</dbReference>
<dbReference type="HOGENOM" id="CLU_035023_2_1_6"/>
<dbReference type="Proteomes" id="UP000000593">
    <property type="component" value="Chromosome 1"/>
</dbReference>
<dbReference type="GO" id="GO:0005886">
    <property type="term" value="C:plasma membrane"/>
    <property type="evidence" value="ECO:0007669"/>
    <property type="project" value="UniProtKB-SubCell"/>
</dbReference>
<dbReference type="GO" id="GO:0008324">
    <property type="term" value="F:monoatomic cation transmembrane transporter activity"/>
    <property type="evidence" value="ECO:0007669"/>
    <property type="project" value="InterPro"/>
</dbReference>
<dbReference type="GO" id="GO:0006813">
    <property type="term" value="P:potassium ion transport"/>
    <property type="evidence" value="ECO:0007669"/>
    <property type="project" value="InterPro"/>
</dbReference>
<dbReference type="Gene3D" id="3.30.70.1450">
    <property type="entry name" value="Regulator of K+ conductance, C-terminal domain"/>
    <property type="match status" value="1"/>
</dbReference>
<dbReference type="HAMAP" id="MF_01015">
    <property type="entry name" value="YbjL"/>
    <property type="match status" value="1"/>
</dbReference>
<dbReference type="InterPro" id="IPR050144">
    <property type="entry name" value="AAE_transporter"/>
</dbReference>
<dbReference type="InterPro" id="IPR006037">
    <property type="entry name" value="RCK_C"/>
</dbReference>
<dbReference type="InterPro" id="IPR036721">
    <property type="entry name" value="RCK_C_sf"/>
</dbReference>
<dbReference type="InterPro" id="IPR023017">
    <property type="entry name" value="Transp_YbjL_put"/>
</dbReference>
<dbReference type="InterPro" id="IPR006512">
    <property type="entry name" value="YidE_YbjL"/>
</dbReference>
<dbReference type="NCBIfam" id="NF003440">
    <property type="entry name" value="PRK04972.1"/>
    <property type="match status" value="1"/>
</dbReference>
<dbReference type="NCBIfam" id="TIGR01625">
    <property type="entry name" value="YidE_YbjL_dupl"/>
    <property type="match status" value="2"/>
</dbReference>
<dbReference type="PANTHER" id="PTHR30445">
    <property type="entry name" value="K(+)_H(+) ANTIPORTER SUBUNIT KHTT"/>
    <property type="match status" value="1"/>
</dbReference>
<dbReference type="PANTHER" id="PTHR30445:SF10">
    <property type="entry name" value="TRANSPORT PROTEIN YBJL-RELATED"/>
    <property type="match status" value="1"/>
</dbReference>
<dbReference type="Pfam" id="PF06826">
    <property type="entry name" value="Asp-Al_Ex"/>
    <property type="match status" value="2"/>
</dbReference>
<dbReference type="Pfam" id="PF02080">
    <property type="entry name" value="TrkA_C"/>
    <property type="match status" value="2"/>
</dbReference>
<dbReference type="SUPFAM" id="SSF116726">
    <property type="entry name" value="TrkA C-terminal domain-like"/>
    <property type="match status" value="2"/>
</dbReference>
<dbReference type="PROSITE" id="PS51202">
    <property type="entry name" value="RCK_C"/>
    <property type="match status" value="2"/>
</dbReference>
<comment type="subcellular location">
    <subcellularLocation>
        <location evidence="1">Cell membrane</location>
        <topology evidence="1">Multi-pass membrane protein</topology>
    </subcellularLocation>
</comment>
<comment type="similarity">
    <text evidence="1">Belongs to the AAE transporter (TC 2.A.81) family. YbjL subfamily.</text>
</comment>
<comment type="sequence caution" evidence="2">
    <conflict type="erroneous initiation">
        <sequence resource="EMBL-CDS" id="CAG20804"/>
    </conflict>
</comment>
<sequence>MNIDVASLLHQNDILLLFVVLAVGLSFGKIRFAKMQVGNSIGVLLTAILFGNAGFTFNTEALNIGFMLFIFCVGIEAGPNFFGIFFRDGKHYLLLALVVLLSAIAITLAMTHYLGLDIGLATGLMAGSLTATPVLVGAKDALNSGLSGISDPDIIKQTIDSLSVGYAMSYLMGLISLIFLAKLMPKLQKQDLAESSQQIARERGIGEVGQRKVYLPIIRAYRVGPELINWIDSRNLRELGIYRQTGCYIERIRRNGILANPDGDAILQEGDEIALVGYPDSHARLDPSFRNGKEVFDRDLLDLRIVEEEIVVKNDNISGKRLSELNLSEYGCFLNRVVRAQIEMPMDHNILLNKGDILQVSGEKSRVLGLAERIGFISIHSQIADLLAFCCFFIIGLLIGSITLAFGHVAFGLGSAAGLLIAGITLGFLRANHPTFGYVPQGALNMAKDLGLMVFMVGIGLSAGSNLFDSFAHIGPMVLVTSLMVSVIPVVLAYLFGAYVLKMNRALLFGAIIGARTCAPAMDMINEHARSTIPALGYAGTYAIANVLLTIAGTLIIIMN</sequence>
<evidence type="ECO:0000255" key="1">
    <source>
        <dbReference type="HAMAP-Rule" id="MF_01015"/>
    </source>
</evidence>
<evidence type="ECO:0000305" key="2"/>